<accession>Q049R7</accession>
<sequence length="167" mass="18881">MNYYNVGKIIATHGLKGEVKVALTTDFPEDRFRAGSRLYLGDDSREVTVAAGRPFKQFWLVTFAEITDIDQAEKLKGTEILISEEDQGELPDGVYYYRELLGCKVLDDESGEEIGELTDIEAPGANDIWEVTDKNGKSFWLPYIPQVVKSVDIDKKEVRVELMEGLR</sequence>
<name>RIMM_LACDB</name>
<dbReference type="EMBL" id="CP000412">
    <property type="protein sequence ID" value="ABJ58805.1"/>
    <property type="molecule type" value="Genomic_DNA"/>
</dbReference>
<dbReference type="RefSeq" id="WP_003618524.1">
    <property type="nucleotide sequence ID" value="NC_008529.1"/>
</dbReference>
<dbReference type="SMR" id="Q049R7"/>
<dbReference type="KEGG" id="lbu:LBUL_1280"/>
<dbReference type="HOGENOM" id="CLU_077636_3_1_9"/>
<dbReference type="BioCyc" id="LDEL321956:LBUL_RS06015-MONOMER"/>
<dbReference type="GO" id="GO:0005737">
    <property type="term" value="C:cytoplasm"/>
    <property type="evidence" value="ECO:0007669"/>
    <property type="project" value="UniProtKB-SubCell"/>
</dbReference>
<dbReference type="GO" id="GO:0005840">
    <property type="term" value="C:ribosome"/>
    <property type="evidence" value="ECO:0007669"/>
    <property type="project" value="InterPro"/>
</dbReference>
<dbReference type="GO" id="GO:0043022">
    <property type="term" value="F:ribosome binding"/>
    <property type="evidence" value="ECO:0007669"/>
    <property type="project" value="InterPro"/>
</dbReference>
<dbReference type="GO" id="GO:0042274">
    <property type="term" value="P:ribosomal small subunit biogenesis"/>
    <property type="evidence" value="ECO:0007669"/>
    <property type="project" value="UniProtKB-UniRule"/>
</dbReference>
<dbReference type="GO" id="GO:0006364">
    <property type="term" value="P:rRNA processing"/>
    <property type="evidence" value="ECO:0007669"/>
    <property type="project" value="UniProtKB-UniRule"/>
</dbReference>
<dbReference type="Gene3D" id="2.30.30.240">
    <property type="entry name" value="PRC-barrel domain"/>
    <property type="match status" value="1"/>
</dbReference>
<dbReference type="Gene3D" id="2.40.30.60">
    <property type="entry name" value="RimM"/>
    <property type="match status" value="1"/>
</dbReference>
<dbReference type="HAMAP" id="MF_00014">
    <property type="entry name" value="Ribosome_mat_RimM"/>
    <property type="match status" value="1"/>
</dbReference>
<dbReference type="InterPro" id="IPR011033">
    <property type="entry name" value="PRC_barrel-like_sf"/>
</dbReference>
<dbReference type="InterPro" id="IPR056792">
    <property type="entry name" value="PRC_RimM"/>
</dbReference>
<dbReference type="InterPro" id="IPR011961">
    <property type="entry name" value="RimM"/>
</dbReference>
<dbReference type="InterPro" id="IPR002676">
    <property type="entry name" value="RimM_N"/>
</dbReference>
<dbReference type="InterPro" id="IPR036976">
    <property type="entry name" value="RimM_N_sf"/>
</dbReference>
<dbReference type="InterPro" id="IPR009000">
    <property type="entry name" value="Transl_B-barrel_sf"/>
</dbReference>
<dbReference type="NCBIfam" id="TIGR02273">
    <property type="entry name" value="16S_RimM"/>
    <property type="match status" value="1"/>
</dbReference>
<dbReference type="PANTHER" id="PTHR33692">
    <property type="entry name" value="RIBOSOME MATURATION FACTOR RIMM"/>
    <property type="match status" value="1"/>
</dbReference>
<dbReference type="PANTHER" id="PTHR33692:SF1">
    <property type="entry name" value="RIBOSOME MATURATION FACTOR RIMM"/>
    <property type="match status" value="1"/>
</dbReference>
<dbReference type="Pfam" id="PF24986">
    <property type="entry name" value="PRC_RimM"/>
    <property type="match status" value="1"/>
</dbReference>
<dbReference type="Pfam" id="PF01782">
    <property type="entry name" value="RimM"/>
    <property type="match status" value="1"/>
</dbReference>
<dbReference type="SUPFAM" id="SSF50346">
    <property type="entry name" value="PRC-barrel domain"/>
    <property type="match status" value="1"/>
</dbReference>
<dbReference type="SUPFAM" id="SSF50447">
    <property type="entry name" value="Translation proteins"/>
    <property type="match status" value="1"/>
</dbReference>
<gene>
    <name evidence="1" type="primary">rimM</name>
    <name type="ordered locus">LBUL_1280</name>
</gene>
<organism>
    <name type="scientific">Lactobacillus delbrueckii subsp. bulgaricus (strain ATCC BAA-365 / Lb-18)</name>
    <dbReference type="NCBI Taxonomy" id="321956"/>
    <lineage>
        <taxon>Bacteria</taxon>
        <taxon>Bacillati</taxon>
        <taxon>Bacillota</taxon>
        <taxon>Bacilli</taxon>
        <taxon>Lactobacillales</taxon>
        <taxon>Lactobacillaceae</taxon>
        <taxon>Lactobacillus</taxon>
    </lineage>
</organism>
<feature type="chain" id="PRO_1000001184" description="Ribosome maturation factor RimM">
    <location>
        <begin position="1"/>
        <end position="167"/>
    </location>
</feature>
<feature type="domain" description="PRC barrel" evidence="1">
    <location>
        <begin position="92"/>
        <end position="166"/>
    </location>
</feature>
<proteinExistence type="inferred from homology"/>
<comment type="function">
    <text evidence="1">An accessory protein needed during the final step in the assembly of 30S ribosomal subunit, possibly for assembly of the head region. Essential for efficient processing of 16S rRNA. May be needed both before and after RbfA during the maturation of 16S rRNA. It has affinity for free ribosomal 30S subunits but not for 70S ribosomes.</text>
</comment>
<comment type="subunit">
    <text evidence="1">Binds ribosomal protein uS19.</text>
</comment>
<comment type="subcellular location">
    <subcellularLocation>
        <location evidence="1">Cytoplasm</location>
    </subcellularLocation>
</comment>
<comment type="domain">
    <text evidence="1">The PRC barrel domain binds ribosomal protein uS19.</text>
</comment>
<comment type="similarity">
    <text evidence="1">Belongs to the RimM family.</text>
</comment>
<protein>
    <recommendedName>
        <fullName evidence="1">Ribosome maturation factor RimM</fullName>
    </recommendedName>
</protein>
<reference key="1">
    <citation type="journal article" date="2006" name="Proc. Natl. Acad. Sci. U.S.A.">
        <title>Comparative genomics of the lactic acid bacteria.</title>
        <authorList>
            <person name="Makarova K.S."/>
            <person name="Slesarev A."/>
            <person name="Wolf Y.I."/>
            <person name="Sorokin A."/>
            <person name="Mirkin B."/>
            <person name="Koonin E.V."/>
            <person name="Pavlov A."/>
            <person name="Pavlova N."/>
            <person name="Karamychev V."/>
            <person name="Polouchine N."/>
            <person name="Shakhova V."/>
            <person name="Grigoriev I."/>
            <person name="Lou Y."/>
            <person name="Rohksar D."/>
            <person name="Lucas S."/>
            <person name="Huang K."/>
            <person name="Goodstein D.M."/>
            <person name="Hawkins T."/>
            <person name="Plengvidhya V."/>
            <person name="Welker D."/>
            <person name="Hughes J."/>
            <person name="Goh Y."/>
            <person name="Benson A."/>
            <person name="Baldwin K."/>
            <person name="Lee J.-H."/>
            <person name="Diaz-Muniz I."/>
            <person name="Dosti B."/>
            <person name="Smeianov V."/>
            <person name="Wechter W."/>
            <person name="Barabote R."/>
            <person name="Lorca G."/>
            <person name="Altermann E."/>
            <person name="Barrangou R."/>
            <person name="Ganesan B."/>
            <person name="Xie Y."/>
            <person name="Rawsthorne H."/>
            <person name="Tamir D."/>
            <person name="Parker C."/>
            <person name="Breidt F."/>
            <person name="Broadbent J.R."/>
            <person name="Hutkins R."/>
            <person name="O'Sullivan D."/>
            <person name="Steele J."/>
            <person name="Unlu G."/>
            <person name="Saier M.H. Jr."/>
            <person name="Klaenhammer T."/>
            <person name="Richardson P."/>
            <person name="Kozyavkin S."/>
            <person name="Weimer B.C."/>
            <person name="Mills D.A."/>
        </authorList>
    </citation>
    <scope>NUCLEOTIDE SEQUENCE [LARGE SCALE GENOMIC DNA]</scope>
    <source>
        <strain>ATCC BAA-365 / Lb-18</strain>
    </source>
</reference>
<keyword id="KW-0143">Chaperone</keyword>
<keyword id="KW-0963">Cytoplasm</keyword>
<keyword id="KW-0690">Ribosome biogenesis</keyword>
<keyword id="KW-0698">rRNA processing</keyword>
<evidence type="ECO:0000255" key="1">
    <source>
        <dbReference type="HAMAP-Rule" id="MF_00014"/>
    </source>
</evidence>